<protein>
    <recommendedName>
        <fullName evidence="1">Mitochondrial distribution and morphology protein 34</fullName>
    </recommendedName>
</protein>
<accession>C5JVU4</accession>
<accession>A0A179UVM3</accession>
<gene>
    <name evidence="1" type="primary">MDM34</name>
    <name type="ORF">BDBG_06097</name>
</gene>
<comment type="function">
    <text evidence="1">Component of the ERMES/MDM complex, which serves as a molecular tether to connect the endoplasmic reticulum (ER) and mitochondria. Components of this complex are involved in the control of mitochondrial shape and protein biogenesis, and function in nonvesicular lipid trafficking between the ER and mitochondria. MDM34 is required for the interaction of the ER-resident membrane protein MMM1 and the outer mitochondrial membrane-resident beta-barrel protein MDM10.</text>
</comment>
<comment type="subunit">
    <text evidence="1">Component of the ER-mitochondria encounter structure (ERMES) or MDM complex, composed of MMM1, MDM10, MDM12 and MDM34.</text>
</comment>
<comment type="subcellular location">
    <subcellularLocation>
        <location evidence="1">Mitochondrion outer membrane</location>
        <topology evidence="1">Multi-pass membrane protein</topology>
    </subcellularLocation>
    <text evidence="1">The ERMES/MDM complex localizes to a few discrete foci (around 10 per single cell), that represent mitochondria-endoplasmic reticulum junctions. These foci are often found next to mtDNA nucleoids.</text>
</comment>
<comment type="domain">
    <text evidence="1">Lacks alpha-helical transmembrane segments, suggesting that it resides in the membrane via beta-sheet conformations similar to those predicted for other outer membrane proteins and porin.</text>
</comment>
<comment type="domain">
    <text evidence="1">The SMP-LTD domain is a barrel-like domain that can bind various types of glycerophospholipids in its interior and mediate their transfer between two adjacent bilayers.</text>
</comment>
<comment type="similarity">
    <text evidence="1">Belongs to the MDM34 family.</text>
</comment>
<evidence type="ECO:0000255" key="1">
    <source>
        <dbReference type="HAMAP-Rule" id="MF_03105"/>
    </source>
</evidence>
<evidence type="ECO:0000256" key="2">
    <source>
        <dbReference type="SAM" id="MobiDB-lite"/>
    </source>
</evidence>
<dbReference type="EMBL" id="GG657462">
    <property type="protein sequence ID" value="OAT11147.1"/>
    <property type="molecule type" value="Genomic_DNA"/>
</dbReference>
<dbReference type="RefSeq" id="XP_002622917.1">
    <property type="nucleotide sequence ID" value="XM_002622871.1"/>
</dbReference>
<dbReference type="SMR" id="C5JVU4"/>
<dbReference type="STRING" id="559298.C5JVU4"/>
<dbReference type="GeneID" id="8503087"/>
<dbReference type="KEGG" id="bgh:BDBG_06097"/>
<dbReference type="VEuPathDB" id="FungiDB:BDBG_06097"/>
<dbReference type="HOGENOM" id="CLU_036502_1_0_1"/>
<dbReference type="OrthoDB" id="17927at2759"/>
<dbReference type="Proteomes" id="UP000002038">
    <property type="component" value="Unassembled WGS sequence"/>
</dbReference>
<dbReference type="GO" id="GO:0032865">
    <property type="term" value="C:ERMES complex"/>
    <property type="evidence" value="ECO:0007669"/>
    <property type="project" value="UniProtKB-UniRule"/>
</dbReference>
<dbReference type="GO" id="GO:0008289">
    <property type="term" value="F:lipid binding"/>
    <property type="evidence" value="ECO:0007669"/>
    <property type="project" value="UniProtKB-KW"/>
</dbReference>
<dbReference type="GO" id="GO:0000002">
    <property type="term" value="P:mitochondrial genome maintenance"/>
    <property type="evidence" value="ECO:0007669"/>
    <property type="project" value="UniProtKB-UniRule"/>
</dbReference>
<dbReference type="GO" id="GO:1990456">
    <property type="term" value="P:mitochondrion-endoplasmic reticulum membrane tethering"/>
    <property type="evidence" value="ECO:0007669"/>
    <property type="project" value="TreeGrafter"/>
</dbReference>
<dbReference type="GO" id="GO:0015914">
    <property type="term" value="P:phospholipid transport"/>
    <property type="evidence" value="ECO:0007669"/>
    <property type="project" value="TreeGrafter"/>
</dbReference>
<dbReference type="CDD" id="cd21673">
    <property type="entry name" value="SMP_Mdm34"/>
    <property type="match status" value="1"/>
</dbReference>
<dbReference type="HAMAP" id="MF_03105">
    <property type="entry name" value="Mdm34"/>
    <property type="match status" value="1"/>
</dbReference>
<dbReference type="InterPro" id="IPR027536">
    <property type="entry name" value="Mdm34"/>
</dbReference>
<dbReference type="InterPro" id="IPR031468">
    <property type="entry name" value="SMP_LBD"/>
</dbReference>
<dbReference type="PANTHER" id="PTHR28185">
    <property type="entry name" value="MITOCHONDRIAL DISTRIBUTION AND MORPHOLOGY PROTEIN 34"/>
    <property type="match status" value="1"/>
</dbReference>
<dbReference type="PANTHER" id="PTHR28185:SF1">
    <property type="entry name" value="MITOCHONDRIAL DISTRIBUTION AND MORPHOLOGY PROTEIN 34"/>
    <property type="match status" value="1"/>
</dbReference>
<dbReference type="PROSITE" id="PS51847">
    <property type="entry name" value="SMP"/>
    <property type="match status" value="1"/>
</dbReference>
<reference key="1">
    <citation type="journal article" date="2015" name="PLoS Genet.">
        <title>The dynamic genome and transcriptome of the human fungal pathogen Blastomyces and close relative Emmonsia.</title>
        <authorList>
            <person name="Munoz J.F."/>
            <person name="Gauthier G.M."/>
            <person name="Desjardins C.A."/>
            <person name="Gallo J.E."/>
            <person name="Holder J."/>
            <person name="Sullivan T.D."/>
            <person name="Marty A.J."/>
            <person name="Carmen J.C."/>
            <person name="Chen Z."/>
            <person name="Ding L."/>
            <person name="Gujja S."/>
            <person name="Magrini V."/>
            <person name="Misas E."/>
            <person name="Mitreva M."/>
            <person name="Priest M."/>
            <person name="Saif S."/>
            <person name="Whiston E.A."/>
            <person name="Young S."/>
            <person name="Zeng Q."/>
            <person name="Goldman W.E."/>
            <person name="Mardis E.R."/>
            <person name="Taylor J.W."/>
            <person name="McEwen J.G."/>
            <person name="Clay O.K."/>
            <person name="Klein B.S."/>
            <person name="Cuomo C.A."/>
        </authorList>
    </citation>
    <scope>NUCLEOTIDE SEQUENCE [LARGE SCALE GENOMIC DNA]</scope>
    <source>
        <strain>SLH14081</strain>
    </source>
</reference>
<name>MDM34_BLAGS</name>
<keyword id="KW-0445">Lipid transport</keyword>
<keyword id="KW-0446">Lipid-binding</keyword>
<keyword id="KW-0472">Membrane</keyword>
<keyword id="KW-0496">Mitochondrion</keyword>
<keyword id="KW-1000">Mitochondrion outer membrane</keyword>
<keyword id="KW-1185">Reference proteome</keyword>
<keyword id="KW-0812">Transmembrane</keyword>
<keyword id="KW-1134">Transmembrane beta strand</keyword>
<keyword id="KW-0813">Transport</keyword>
<organism>
    <name type="scientific">Blastomyces gilchristii (strain SLH14081)</name>
    <name type="common">Blastomyces dermatitidis</name>
    <dbReference type="NCBI Taxonomy" id="559298"/>
    <lineage>
        <taxon>Eukaryota</taxon>
        <taxon>Fungi</taxon>
        <taxon>Dikarya</taxon>
        <taxon>Ascomycota</taxon>
        <taxon>Pezizomycotina</taxon>
        <taxon>Eurotiomycetes</taxon>
        <taxon>Eurotiomycetidae</taxon>
        <taxon>Onygenales</taxon>
        <taxon>Ajellomycetaceae</taxon>
        <taxon>Blastomyces</taxon>
    </lineage>
</organism>
<feature type="chain" id="PRO_0000384322" description="Mitochondrial distribution and morphology protein 34">
    <location>
        <begin position="1"/>
        <end position="627"/>
    </location>
</feature>
<feature type="domain" description="SMP-LTD" evidence="1">
    <location>
        <begin position="1"/>
        <end position="195"/>
    </location>
</feature>
<feature type="region of interest" description="Disordered" evidence="2">
    <location>
        <begin position="209"/>
        <end position="230"/>
    </location>
</feature>
<feature type="region of interest" description="Disordered" evidence="2">
    <location>
        <begin position="332"/>
        <end position="470"/>
    </location>
</feature>
<feature type="region of interest" description="Disordered" evidence="2">
    <location>
        <begin position="486"/>
        <end position="557"/>
    </location>
</feature>
<feature type="region of interest" description="Disordered" evidence="2">
    <location>
        <begin position="586"/>
        <end position="627"/>
    </location>
</feature>
<feature type="compositionally biased region" description="Low complexity" evidence="2">
    <location>
        <begin position="215"/>
        <end position="225"/>
    </location>
</feature>
<feature type="compositionally biased region" description="Low complexity" evidence="2">
    <location>
        <begin position="332"/>
        <end position="341"/>
    </location>
</feature>
<feature type="compositionally biased region" description="Basic residues" evidence="2">
    <location>
        <begin position="360"/>
        <end position="372"/>
    </location>
</feature>
<feature type="compositionally biased region" description="Basic and acidic residues" evidence="2">
    <location>
        <begin position="373"/>
        <end position="384"/>
    </location>
</feature>
<feature type="compositionally biased region" description="Low complexity" evidence="2">
    <location>
        <begin position="390"/>
        <end position="412"/>
    </location>
</feature>
<feature type="compositionally biased region" description="Basic and acidic residues" evidence="2">
    <location>
        <begin position="436"/>
        <end position="451"/>
    </location>
</feature>
<feature type="compositionally biased region" description="Low complexity" evidence="2">
    <location>
        <begin position="528"/>
        <end position="557"/>
    </location>
</feature>
<sequence length="627" mass="68453">MAFNFNWSPLMADAGFYTRAQELLTAALNKSPKPPIIVDDIVVTELNLGSNPPELEILEIGDLAEDRFRGIFKMSYAGDAFLTLKTCVQANPLNTYLLTRHPFTSPQPLAAATGLTIPLQITLSDIKLSGFVILVFSKQKGITVVFRNDPLESLKVSSTFDSIPFVRDYLQKEIEGQLRILFMDELPAIIHRLSLRLWGTEYSELETTSAQVTNPSLDGPGLDPLLNPPQDPVDASGNVLSISEIASLSLDSGVEMHSLFSRKNVLRLAALTDSQRTLSLFTPSIREVVFRAWTGSMEQADGPSGLVSPMSPPLSRTHSHIATSSLSLQDAASLASSSHSRPTPPSSGFSGYGLSMGAGRHSKAHARKRKKRVVDLRRRPKSADDMESVSGESAYTETSTTTSAVSVFSGSTIPEENNDDPVTPPVSPQRTIRRPTLRDRIAARDDAERNSRRGIPAEFGHDLPTVRTSPPIANDMARIITSASNLQRQLQQQQPADSKPLPSLQETAPIRTLRPSPSSTPQYPTEKPNASNNYTSSSSPSARDPQQQQPQQLSRPSSSFIMESAQNGGILEQAWMMKMASEIARRIQDEKMGGEDPTNSSSRGGSGGGFWERPSMRSHTPPPAYRH</sequence>
<proteinExistence type="inferred from homology"/>